<gene>
    <name evidence="1" type="primary">rpmD</name>
    <name type="ordered locus">RSKD131_0032</name>
</gene>
<evidence type="ECO:0000255" key="1">
    <source>
        <dbReference type="HAMAP-Rule" id="MF_01371"/>
    </source>
</evidence>
<evidence type="ECO:0000305" key="2"/>
<dbReference type="EMBL" id="CP001150">
    <property type="protein sequence ID" value="ACL99891.1"/>
    <property type="molecule type" value="Genomic_DNA"/>
</dbReference>
<dbReference type="RefSeq" id="WP_002722524.1">
    <property type="nucleotide sequence ID" value="NC_011963.1"/>
</dbReference>
<dbReference type="SMR" id="B9KLA9"/>
<dbReference type="GeneID" id="67445518"/>
<dbReference type="KEGG" id="rsk:RSKD131_0032"/>
<dbReference type="HOGENOM" id="CLU_131047_1_2_5"/>
<dbReference type="GO" id="GO:0022625">
    <property type="term" value="C:cytosolic large ribosomal subunit"/>
    <property type="evidence" value="ECO:0007669"/>
    <property type="project" value="TreeGrafter"/>
</dbReference>
<dbReference type="GO" id="GO:0003735">
    <property type="term" value="F:structural constituent of ribosome"/>
    <property type="evidence" value="ECO:0007669"/>
    <property type="project" value="InterPro"/>
</dbReference>
<dbReference type="GO" id="GO:0006412">
    <property type="term" value="P:translation"/>
    <property type="evidence" value="ECO:0007669"/>
    <property type="project" value="UniProtKB-UniRule"/>
</dbReference>
<dbReference type="CDD" id="cd01658">
    <property type="entry name" value="Ribosomal_L30"/>
    <property type="match status" value="1"/>
</dbReference>
<dbReference type="Gene3D" id="3.30.1390.20">
    <property type="entry name" value="Ribosomal protein L30, ferredoxin-like fold domain"/>
    <property type="match status" value="1"/>
</dbReference>
<dbReference type="HAMAP" id="MF_01371_B">
    <property type="entry name" value="Ribosomal_uL30_B"/>
    <property type="match status" value="1"/>
</dbReference>
<dbReference type="InterPro" id="IPR036919">
    <property type="entry name" value="Ribo_uL30_ferredoxin-like_sf"/>
</dbReference>
<dbReference type="InterPro" id="IPR005996">
    <property type="entry name" value="Ribosomal_uL30_bac-type"/>
</dbReference>
<dbReference type="InterPro" id="IPR016082">
    <property type="entry name" value="Ribosomal_uL30_ferredoxin-like"/>
</dbReference>
<dbReference type="NCBIfam" id="TIGR01308">
    <property type="entry name" value="rpmD_bact"/>
    <property type="match status" value="1"/>
</dbReference>
<dbReference type="PANTHER" id="PTHR15892:SF2">
    <property type="entry name" value="LARGE RIBOSOMAL SUBUNIT PROTEIN UL30M"/>
    <property type="match status" value="1"/>
</dbReference>
<dbReference type="PANTHER" id="PTHR15892">
    <property type="entry name" value="MITOCHONDRIAL RIBOSOMAL PROTEIN L30"/>
    <property type="match status" value="1"/>
</dbReference>
<dbReference type="Pfam" id="PF00327">
    <property type="entry name" value="Ribosomal_L30"/>
    <property type="match status" value="1"/>
</dbReference>
<dbReference type="PIRSF" id="PIRSF002211">
    <property type="entry name" value="Ribosomal_L30_bac-type"/>
    <property type="match status" value="1"/>
</dbReference>
<dbReference type="SUPFAM" id="SSF55129">
    <property type="entry name" value="Ribosomal protein L30p/L7e"/>
    <property type="match status" value="1"/>
</dbReference>
<reference key="1">
    <citation type="journal article" date="2009" name="J. Bacteriol.">
        <title>Complete genome sequence of Rhodobacter sphaeroides KD131.</title>
        <authorList>
            <person name="Lim S.-K."/>
            <person name="Kim S.J."/>
            <person name="Cha S.H."/>
            <person name="Oh Y.-K."/>
            <person name="Rhee H.-J."/>
            <person name="Kim M.-S."/>
            <person name="Lee J.K."/>
        </authorList>
    </citation>
    <scope>NUCLEOTIDE SEQUENCE [LARGE SCALE GENOMIC DNA]</scope>
    <source>
        <strain>KD131 / KCTC 12085</strain>
    </source>
</reference>
<feature type="chain" id="PRO_1000184156" description="Large ribosomal subunit protein uL30">
    <location>
        <begin position="1"/>
        <end position="62"/>
    </location>
</feature>
<protein>
    <recommendedName>
        <fullName evidence="1">Large ribosomal subunit protein uL30</fullName>
    </recommendedName>
    <alternativeName>
        <fullName evidence="2">50S ribosomal protein L30</fullName>
    </alternativeName>
</protein>
<proteinExistence type="inferred from homology"/>
<organism>
    <name type="scientific">Cereibacter sphaeroides (strain KD131 / KCTC 12085)</name>
    <name type="common">Rhodobacter sphaeroides</name>
    <dbReference type="NCBI Taxonomy" id="557760"/>
    <lineage>
        <taxon>Bacteria</taxon>
        <taxon>Pseudomonadati</taxon>
        <taxon>Pseudomonadota</taxon>
        <taxon>Alphaproteobacteria</taxon>
        <taxon>Rhodobacterales</taxon>
        <taxon>Paracoccaceae</taxon>
        <taxon>Cereibacter</taxon>
    </lineage>
</organism>
<sequence>MAKTIIVKQVRSAARRPAVQTAVLKGLGLNKMHRTRELEDTPSIRGMVAKIPHLVEIIEERG</sequence>
<name>RL30_CERSK</name>
<accession>B9KLA9</accession>
<comment type="subunit">
    <text evidence="1">Part of the 50S ribosomal subunit.</text>
</comment>
<comment type="similarity">
    <text evidence="1">Belongs to the universal ribosomal protein uL30 family.</text>
</comment>
<keyword id="KW-0687">Ribonucleoprotein</keyword>
<keyword id="KW-0689">Ribosomal protein</keyword>